<feature type="chain" id="PRO_0000321613" description="Dihydroxy-acid dehydratase">
    <location>
        <begin position="1"/>
        <end position="550"/>
    </location>
</feature>
<feature type="active site" description="Proton acceptor" evidence="1">
    <location>
        <position position="467"/>
    </location>
</feature>
<feature type="binding site" evidence="1">
    <location>
        <position position="81"/>
    </location>
    <ligand>
        <name>Mg(2+)</name>
        <dbReference type="ChEBI" id="CHEBI:18420"/>
    </ligand>
</feature>
<feature type="binding site" evidence="1">
    <location>
        <position position="122"/>
    </location>
    <ligand>
        <name>[2Fe-2S] cluster</name>
        <dbReference type="ChEBI" id="CHEBI:190135"/>
    </ligand>
</feature>
<feature type="binding site" evidence="1">
    <location>
        <position position="123"/>
    </location>
    <ligand>
        <name>Mg(2+)</name>
        <dbReference type="ChEBI" id="CHEBI:18420"/>
    </ligand>
</feature>
<feature type="binding site" description="via carbamate group" evidence="1">
    <location>
        <position position="124"/>
    </location>
    <ligand>
        <name>Mg(2+)</name>
        <dbReference type="ChEBI" id="CHEBI:18420"/>
    </ligand>
</feature>
<feature type="binding site" evidence="1">
    <location>
        <position position="194"/>
    </location>
    <ligand>
        <name>[2Fe-2S] cluster</name>
        <dbReference type="ChEBI" id="CHEBI:190135"/>
    </ligand>
</feature>
<feature type="binding site" evidence="1">
    <location>
        <position position="442"/>
    </location>
    <ligand>
        <name>Mg(2+)</name>
        <dbReference type="ChEBI" id="CHEBI:18420"/>
    </ligand>
</feature>
<feature type="modified residue" description="N6-carboxylysine" evidence="1">
    <location>
        <position position="124"/>
    </location>
</feature>
<dbReference type="EC" id="4.2.1.9" evidence="1"/>
<dbReference type="EMBL" id="CP000780">
    <property type="protein sequence ID" value="ABS55721.1"/>
    <property type="molecule type" value="Genomic_DNA"/>
</dbReference>
<dbReference type="RefSeq" id="WP_012106752.1">
    <property type="nucleotide sequence ID" value="NC_009712.1"/>
</dbReference>
<dbReference type="SMR" id="A7I7L0"/>
<dbReference type="STRING" id="456442.Mboo_1203"/>
<dbReference type="GeneID" id="5411351"/>
<dbReference type="KEGG" id="mbn:Mboo_1203"/>
<dbReference type="eggNOG" id="arCOG04045">
    <property type="taxonomic scope" value="Archaea"/>
</dbReference>
<dbReference type="HOGENOM" id="CLU_014271_4_2_2"/>
<dbReference type="OrthoDB" id="8674at2157"/>
<dbReference type="UniPathway" id="UPA00047">
    <property type="reaction ID" value="UER00057"/>
</dbReference>
<dbReference type="UniPathway" id="UPA00049">
    <property type="reaction ID" value="UER00061"/>
</dbReference>
<dbReference type="Proteomes" id="UP000002408">
    <property type="component" value="Chromosome"/>
</dbReference>
<dbReference type="GO" id="GO:0005829">
    <property type="term" value="C:cytosol"/>
    <property type="evidence" value="ECO:0007669"/>
    <property type="project" value="TreeGrafter"/>
</dbReference>
<dbReference type="GO" id="GO:0051537">
    <property type="term" value="F:2 iron, 2 sulfur cluster binding"/>
    <property type="evidence" value="ECO:0007669"/>
    <property type="project" value="UniProtKB-UniRule"/>
</dbReference>
<dbReference type="GO" id="GO:0004160">
    <property type="term" value="F:dihydroxy-acid dehydratase activity"/>
    <property type="evidence" value="ECO:0007669"/>
    <property type="project" value="UniProtKB-UniRule"/>
</dbReference>
<dbReference type="GO" id="GO:0000287">
    <property type="term" value="F:magnesium ion binding"/>
    <property type="evidence" value="ECO:0007669"/>
    <property type="project" value="UniProtKB-UniRule"/>
</dbReference>
<dbReference type="GO" id="GO:0009097">
    <property type="term" value="P:isoleucine biosynthetic process"/>
    <property type="evidence" value="ECO:0007669"/>
    <property type="project" value="UniProtKB-UniRule"/>
</dbReference>
<dbReference type="GO" id="GO:0009099">
    <property type="term" value="P:L-valine biosynthetic process"/>
    <property type="evidence" value="ECO:0007669"/>
    <property type="project" value="UniProtKB-UniRule"/>
</dbReference>
<dbReference type="FunFam" id="3.50.30.80:FF:000001">
    <property type="entry name" value="Dihydroxy-acid dehydratase"/>
    <property type="match status" value="1"/>
</dbReference>
<dbReference type="Gene3D" id="3.50.30.80">
    <property type="entry name" value="IlvD/EDD C-terminal domain-like"/>
    <property type="match status" value="1"/>
</dbReference>
<dbReference type="HAMAP" id="MF_00012">
    <property type="entry name" value="IlvD"/>
    <property type="match status" value="1"/>
</dbReference>
<dbReference type="InterPro" id="IPR042096">
    <property type="entry name" value="Dihydro-acid_dehy_C"/>
</dbReference>
<dbReference type="InterPro" id="IPR004404">
    <property type="entry name" value="DihydroxyA_deHydtase"/>
</dbReference>
<dbReference type="InterPro" id="IPR020558">
    <property type="entry name" value="DiOHA_6PGluconate_deHydtase_CS"/>
</dbReference>
<dbReference type="InterPro" id="IPR056740">
    <property type="entry name" value="ILV_EDD_C"/>
</dbReference>
<dbReference type="InterPro" id="IPR000581">
    <property type="entry name" value="ILV_EDD_N"/>
</dbReference>
<dbReference type="InterPro" id="IPR037237">
    <property type="entry name" value="IlvD/EDD_N"/>
</dbReference>
<dbReference type="NCBIfam" id="TIGR00110">
    <property type="entry name" value="ilvD"/>
    <property type="match status" value="1"/>
</dbReference>
<dbReference type="NCBIfam" id="NF002068">
    <property type="entry name" value="PRK00911.1"/>
    <property type="match status" value="1"/>
</dbReference>
<dbReference type="PANTHER" id="PTHR43661">
    <property type="entry name" value="D-XYLONATE DEHYDRATASE"/>
    <property type="match status" value="1"/>
</dbReference>
<dbReference type="PANTHER" id="PTHR43661:SF3">
    <property type="entry name" value="D-XYLONATE DEHYDRATASE YAGF-RELATED"/>
    <property type="match status" value="1"/>
</dbReference>
<dbReference type="Pfam" id="PF24877">
    <property type="entry name" value="ILV_EDD_C"/>
    <property type="match status" value="1"/>
</dbReference>
<dbReference type="Pfam" id="PF00920">
    <property type="entry name" value="ILVD_EDD_N"/>
    <property type="match status" value="1"/>
</dbReference>
<dbReference type="SUPFAM" id="SSF143975">
    <property type="entry name" value="IlvD/EDD N-terminal domain-like"/>
    <property type="match status" value="1"/>
</dbReference>
<dbReference type="SUPFAM" id="SSF52016">
    <property type="entry name" value="LeuD/IlvD-like"/>
    <property type="match status" value="1"/>
</dbReference>
<dbReference type="PROSITE" id="PS00886">
    <property type="entry name" value="ILVD_EDD_1"/>
    <property type="match status" value="1"/>
</dbReference>
<protein>
    <recommendedName>
        <fullName evidence="1">Dihydroxy-acid dehydratase</fullName>
        <shortName evidence="1">DAD</shortName>
        <ecNumber evidence="1">4.2.1.9</ecNumber>
    </recommendedName>
</protein>
<accession>A7I7L0</accession>
<name>ILVD_METB6</name>
<comment type="function">
    <text evidence="1">Functions in the biosynthesis of branched-chain amino acids. Catalyzes the dehydration of (2R,3R)-2,3-dihydroxy-3-methylpentanoate (2,3-dihydroxy-3-methylvalerate) into 2-oxo-3-methylpentanoate (2-oxo-3-methylvalerate) and of (2R)-2,3-dihydroxy-3-methylbutanoate (2,3-dihydroxyisovalerate) into 2-oxo-3-methylbutanoate (2-oxoisovalerate), the penultimate precursor to L-isoleucine and L-valine, respectively.</text>
</comment>
<comment type="catalytic activity">
    <reaction evidence="1">
        <text>(2R)-2,3-dihydroxy-3-methylbutanoate = 3-methyl-2-oxobutanoate + H2O</text>
        <dbReference type="Rhea" id="RHEA:24809"/>
        <dbReference type="ChEBI" id="CHEBI:11851"/>
        <dbReference type="ChEBI" id="CHEBI:15377"/>
        <dbReference type="ChEBI" id="CHEBI:49072"/>
        <dbReference type="EC" id="4.2.1.9"/>
    </reaction>
    <physiologicalReaction direction="left-to-right" evidence="1">
        <dbReference type="Rhea" id="RHEA:24810"/>
    </physiologicalReaction>
</comment>
<comment type="catalytic activity">
    <reaction evidence="1">
        <text>(2R,3R)-2,3-dihydroxy-3-methylpentanoate = (S)-3-methyl-2-oxopentanoate + H2O</text>
        <dbReference type="Rhea" id="RHEA:27694"/>
        <dbReference type="ChEBI" id="CHEBI:15377"/>
        <dbReference type="ChEBI" id="CHEBI:35146"/>
        <dbReference type="ChEBI" id="CHEBI:49258"/>
        <dbReference type="EC" id="4.2.1.9"/>
    </reaction>
    <physiologicalReaction direction="left-to-right" evidence="1">
        <dbReference type="Rhea" id="RHEA:27695"/>
    </physiologicalReaction>
</comment>
<comment type="cofactor">
    <cofactor evidence="1">
        <name>[2Fe-2S] cluster</name>
        <dbReference type="ChEBI" id="CHEBI:190135"/>
    </cofactor>
    <text evidence="1">Binds 1 [2Fe-2S] cluster per subunit. This cluster acts as a Lewis acid cofactor.</text>
</comment>
<comment type="cofactor">
    <cofactor evidence="1">
        <name>Mg(2+)</name>
        <dbReference type="ChEBI" id="CHEBI:18420"/>
    </cofactor>
</comment>
<comment type="pathway">
    <text evidence="1">Amino-acid biosynthesis; L-isoleucine biosynthesis; L-isoleucine from 2-oxobutanoate: step 3/4.</text>
</comment>
<comment type="pathway">
    <text evidence="1">Amino-acid biosynthesis; L-valine biosynthesis; L-valine from pyruvate: step 3/4.</text>
</comment>
<comment type="subunit">
    <text evidence="1">Homodimer.</text>
</comment>
<comment type="similarity">
    <text evidence="1">Belongs to the IlvD/Edd family.</text>
</comment>
<gene>
    <name evidence="1" type="primary">ilvD</name>
    <name type="ordered locus">Mboo_1203</name>
</gene>
<proteinExistence type="inferred from homology"/>
<sequence length="550" mass="58026">MTDLRSDTIRKGYERAPNRSLLRSLGVTDREIELPFIGIANAFNTIVPGHTHLRQLSDKVKEGIAAAGGVPFEFGVIGICDGIAMGHEGMRYSLPSRENIADSIELMVQAHRFDGLVCVGTCDKIVPGMLMAAVRTNIPTIVVTGGAMLPGSSGGKDLSLIDVFEGVGKVAAGTMEEDALKELECCAMPGCGSCQGLYTANTMACMTETMGMSLPGCAAVPAVEAAKLRIARESGEAIIPLVKKNSTARDIVTKKSLENAIRVDMALGGSTNTVLHLMAIATEAEIPLSLADFNRIADEIPHICHMLPAGPYSMQALYRAGGIPAVLKRLEKHLDDCPTVSGLSLYQVARNAMIKNEQVIRSLDAPVSPAGGLRILFGSLAPDGAVVKSAAVPKEIWKHTGPARVFESEEPAMAAILSRQIHEGDAVIIRNEGPRGGPGMPEMLSATSALMGVGYKNVVLITDGRFSGGTRGPCIGHVAPEAAVGGPIALVQDGDRIAVDLFMRTIDLLVDPEVLTSRKAAWKPVMRPVTGVLARYAKTVGQANLGAVLR</sequence>
<keyword id="KW-0001">2Fe-2S</keyword>
<keyword id="KW-0028">Amino-acid biosynthesis</keyword>
<keyword id="KW-0100">Branched-chain amino acid biosynthesis</keyword>
<keyword id="KW-0408">Iron</keyword>
<keyword id="KW-0411">Iron-sulfur</keyword>
<keyword id="KW-0456">Lyase</keyword>
<keyword id="KW-0460">Magnesium</keyword>
<keyword id="KW-0479">Metal-binding</keyword>
<keyword id="KW-1185">Reference proteome</keyword>
<organism>
    <name type="scientific">Methanoregula boonei (strain DSM 21154 / JCM 14090 / 6A8)</name>
    <dbReference type="NCBI Taxonomy" id="456442"/>
    <lineage>
        <taxon>Archaea</taxon>
        <taxon>Methanobacteriati</taxon>
        <taxon>Methanobacteriota</taxon>
        <taxon>Stenosarchaea group</taxon>
        <taxon>Methanomicrobia</taxon>
        <taxon>Methanomicrobiales</taxon>
        <taxon>Methanoregulaceae</taxon>
        <taxon>Methanoregula</taxon>
    </lineage>
</organism>
<evidence type="ECO:0000255" key="1">
    <source>
        <dbReference type="HAMAP-Rule" id="MF_00012"/>
    </source>
</evidence>
<reference key="1">
    <citation type="journal article" date="2015" name="Microbiology">
        <title>Genome of Methanoregula boonei 6A8 reveals adaptations to oligotrophic peatland environments.</title>
        <authorList>
            <person name="Braeuer S."/>
            <person name="Cadillo-Quiroz H."/>
            <person name="Kyrpides N."/>
            <person name="Woyke T."/>
            <person name="Goodwin L."/>
            <person name="Detter C."/>
            <person name="Podell S."/>
            <person name="Yavitt J.B."/>
            <person name="Zinder S.H."/>
        </authorList>
    </citation>
    <scope>NUCLEOTIDE SEQUENCE [LARGE SCALE GENOMIC DNA]</scope>
    <source>
        <strain>DSM 21154 / JCM 14090 / 6A8</strain>
    </source>
</reference>